<reference evidence="7" key="1">
    <citation type="journal article" date="1998" name="Science">
        <title>Genome sequence of the nematode C. elegans: a platform for investigating biology.</title>
        <authorList>
            <consortium name="The C. elegans sequencing consortium"/>
        </authorList>
    </citation>
    <scope>NUCLEOTIDE SEQUENCE [LARGE SCALE GENOMIC DNA]</scope>
    <source>
        <strain evidence="7">Bristol N2</strain>
    </source>
</reference>
<reference evidence="6" key="2">
    <citation type="journal article" date="2015" name="Biochim. Biophys. Acta">
        <title>Lipidomic and proteomic analysis of Caenorhabditis elegans lipid droplets and identification of ACS-4 as a lipid droplet-associated protein.</title>
        <authorList>
            <person name="Vrablik T.L."/>
            <person name="Petyuk V.A."/>
            <person name="Larson E.M."/>
            <person name="Smith R.D."/>
            <person name="Watts J.L."/>
        </authorList>
    </citation>
    <scope>FUNCTION</scope>
    <scope>IDENTIFICATION BY MASS SPECTROMETRY</scope>
    <scope>SUBCELLULAR LOCATION</scope>
    <scope>DISRUPTION PHENOTYPE</scope>
</reference>
<reference evidence="6" key="3">
    <citation type="journal article" date="2015" name="Biochim. Biophys. Acta">
        <title>Identification of lipid droplet structure-like/resident proteins in Caenorhabditis elegans.</title>
        <authorList>
            <person name="Na H."/>
            <person name="Zhang P."/>
            <person name="Chen Y."/>
            <person name="Zhu X."/>
            <person name="Liu Y."/>
            <person name="Liu Y."/>
            <person name="Xie K."/>
            <person name="Xu N."/>
            <person name="Yang F."/>
            <person name="Yu Y."/>
            <person name="Cichello S."/>
            <person name="Mak H.Y."/>
            <person name="Wang M.C."/>
            <person name="Zhang H."/>
            <person name="Liu P."/>
        </authorList>
    </citation>
    <scope>FUNCTION</scope>
    <scope>IDENTIFICATION BY MASS SPECTROMETRY</scope>
    <scope>SUBCELLULAR LOCATION</scope>
    <scope>TISSUE SPECIFICITY</scope>
    <scope>DEVELOPMENTAL STAGE</scope>
    <scope>DISRUPTION PHENOTYPE</scope>
</reference>
<reference evidence="6" key="4">
    <citation type="journal article" date="2015" name="PeerJ">
        <title>Perilipin-related protein regulates lipid metabolism in C. elegans.</title>
        <authorList>
            <person name="Chughtai A.A."/>
            <person name="Kassak F."/>
            <person name="Kostrouchova M."/>
            <person name="Novotny J.P."/>
            <person name="Krause M.W."/>
            <person name="Saudek V."/>
            <person name="Kostrouch Z."/>
            <person name="Kostrouchova M."/>
        </authorList>
    </citation>
    <scope>FUNCTION</scope>
    <scope>SUBCELLULAR LOCATION</scope>
    <scope>TISSUE SPECIFICITY</scope>
    <scope>DEVELOPMENTAL STAGE</scope>
    <scope>DISRUPTION PHENOTYPE</scope>
</reference>
<accession>A8WHP8</accession>
<accession>Q23095</accession>
<accession>Q65ZB1</accession>
<comment type="function">
    <text evidence="1 2 3">Lipid droplet-associated protein which plays a role in lipid droplet clustering (PubMed:26025681, PubMed:26121959, PubMed:26357594).</text>
</comment>
<comment type="subcellular location">
    <subcellularLocation>
        <location evidence="1 2 3">Lipid droplet</location>
    </subcellularLocation>
</comment>
<comment type="alternative products">
    <event type="alternative splicing"/>
    <isoform>
        <id>A8WHP8-1</id>
        <name evidence="10">c</name>
        <sequence type="displayed"/>
    </isoform>
    <isoform>
        <id>A8WHP8-2</id>
        <name evidence="8">a</name>
        <sequence type="described" ref="VSP_059202"/>
    </isoform>
    <isoform>
        <id>A8WHP8-3</id>
        <name evidence="9">b</name>
        <sequence type="described" ref="VSP_059202 VSP_059203 VSP_059204"/>
    </isoform>
</comment>
<comment type="tissue specificity">
    <text evidence="1 3">Expressed in intestinal and epidermal cells (PubMed:26357594). Expressed in the muscle and hypodermis (PubMed:26025681).</text>
</comment>
<comment type="developmental stage">
    <text evidence="1 3">Expressed from embryos to adults (PubMed:26357594). First expressed at the 3-fold stage of embryonic development (PubMed:26357594). Highly expressed in embryos (PubMed:26025681).</text>
</comment>
<comment type="disruption phenotype">
    <text evidence="1 3">Viable, and able to reproduce normally, but embryos contain large lipid droplets (PubMed:26121959, PubMed:26357594). Reduced body fat accumulation (PubMed:26121959). Lipid droplets cluster in intestinal cells and contain a reduced amount of triglycerides (PubMed:26025681). RNAi-mediated knockdown results in a reduced brood size (PubMed:26357594).</text>
</comment>
<comment type="similarity">
    <text evidence="6">Belongs to the perilipin family.</text>
</comment>
<dbReference type="EMBL" id="BX284601">
    <property type="protein sequence ID" value="CAA95854.1"/>
    <property type="molecule type" value="Genomic_DNA"/>
</dbReference>
<dbReference type="EMBL" id="BX284601">
    <property type="protein sequence ID" value="CAH19105.1"/>
    <property type="molecule type" value="Genomic_DNA"/>
</dbReference>
<dbReference type="EMBL" id="BX284601">
    <property type="protein sequence ID" value="CAP16290.1"/>
    <property type="molecule type" value="Genomic_DNA"/>
</dbReference>
<dbReference type="PIR" id="T26032">
    <property type="entry name" value="T26032"/>
</dbReference>
<dbReference type="RefSeq" id="NP_001021646.1">
    <molecule id="A8WHP8-2"/>
    <property type="nucleotide sequence ID" value="NM_001026475.4"/>
</dbReference>
<dbReference type="RefSeq" id="NP_001021647.1">
    <molecule id="A8WHP8-3"/>
    <property type="nucleotide sequence ID" value="NM_001026476.5"/>
</dbReference>
<dbReference type="RefSeq" id="NP_001122526.1">
    <molecule id="A8WHP8-1"/>
    <property type="nucleotide sequence ID" value="NM_001129054.5"/>
</dbReference>
<dbReference type="SMR" id="A8WHP8"/>
<dbReference type="FunCoup" id="A8WHP8">
    <property type="interactions" value="61"/>
</dbReference>
<dbReference type="IntAct" id="A8WHP8">
    <property type="interactions" value="1"/>
</dbReference>
<dbReference type="STRING" id="6239.W01A8.1c.2"/>
<dbReference type="PaxDb" id="6239-W01A8.1c.2"/>
<dbReference type="PeptideAtlas" id="A8WHP8"/>
<dbReference type="EnsemblMetazoa" id="W01A8.1a.1">
    <molecule id="A8WHP8-2"/>
    <property type="protein sequence ID" value="W01A8.1a.1"/>
    <property type="gene ID" value="WBGene00007024"/>
</dbReference>
<dbReference type="EnsemblMetazoa" id="W01A8.1b.1">
    <molecule id="A8WHP8-3"/>
    <property type="protein sequence ID" value="W01A8.1b.1"/>
    <property type="gene ID" value="WBGene00007024"/>
</dbReference>
<dbReference type="EnsemblMetazoa" id="W01A8.1b.2">
    <molecule id="A8WHP8-3"/>
    <property type="protein sequence ID" value="W01A8.1b.2"/>
    <property type="gene ID" value="WBGene00007024"/>
</dbReference>
<dbReference type="EnsemblMetazoa" id="W01A8.1c.1">
    <molecule id="A8WHP8-1"/>
    <property type="protein sequence ID" value="W01A8.1c.1"/>
    <property type="gene ID" value="WBGene00007024"/>
</dbReference>
<dbReference type="GeneID" id="172437"/>
<dbReference type="KEGG" id="cel:CELE_W01A8.1"/>
<dbReference type="UCSC" id="W01A8.1c.1">
    <property type="organism name" value="c. elegans"/>
</dbReference>
<dbReference type="AGR" id="WB:WBGene00007024"/>
<dbReference type="CTD" id="172437"/>
<dbReference type="WormBase" id="W01A8.1a">
    <molecule id="A8WHP8-2"/>
    <property type="protein sequence ID" value="CE18303"/>
    <property type="gene ID" value="WBGene00007024"/>
    <property type="gene designation" value="plin-1"/>
</dbReference>
<dbReference type="WormBase" id="W01A8.1b">
    <molecule id="A8WHP8-3"/>
    <property type="protein sequence ID" value="CE06531"/>
    <property type="gene ID" value="WBGene00007024"/>
    <property type="gene designation" value="plin-1"/>
</dbReference>
<dbReference type="WormBase" id="W01A8.1c">
    <molecule id="A8WHP8-1"/>
    <property type="protein sequence ID" value="CE41705"/>
    <property type="gene ID" value="WBGene00007024"/>
    <property type="gene designation" value="plin-1"/>
</dbReference>
<dbReference type="eggNOG" id="ENOG502SAGX">
    <property type="taxonomic scope" value="Eukaryota"/>
</dbReference>
<dbReference type="InParanoid" id="A8WHP8"/>
<dbReference type="OMA" id="KVQQISR"/>
<dbReference type="OrthoDB" id="5869556at2759"/>
<dbReference type="PRO" id="PR:A8WHP8"/>
<dbReference type="Proteomes" id="UP000001940">
    <property type="component" value="Chromosome I"/>
</dbReference>
<dbReference type="Bgee" id="WBGene00007024">
    <property type="expression patterns" value="Expressed in adult organism and 4 other cell types or tissues"/>
</dbReference>
<dbReference type="GO" id="GO:0005811">
    <property type="term" value="C:lipid droplet"/>
    <property type="evidence" value="ECO:0007669"/>
    <property type="project" value="UniProtKB-SubCell"/>
</dbReference>
<dbReference type="GO" id="GO:0009792">
    <property type="term" value="P:embryo development ending in birth or egg hatching"/>
    <property type="evidence" value="ECO:0000316"/>
    <property type="project" value="WormBase"/>
</dbReference>
<dbReference type="InterPro" id="IPR004279">
    <property type="entry name" value="Perilipin"/>
</dbReference>
<dbReference type="Pfam" id="PF03036">
    <property type="entry name" value="Perilipin"/>
    <property type="match status" value="1"/>
</dbReference>
<evidence type="ECO:0000269" key="1">
    <source>
    </source>
</evidence>
<evidence type="ECO:0000269" key="2">
    <source>
    </source>
</evidence>
<evidence type="ECO:0000269" key="3">
    <source>
    </source>
</evidence>
<evidence type="ECO:0000303" key="4">
    <source>
    </source>
</evidence>
<evidence type="ECO:0000303" key="5">
    <source>
    </source>
</evidence>
<evidence type="ECO:0000305" key="6"/>
<evidence type="ECO:0000312" key="7">
    <source>
        <dbReference type="Proteomes" id="UP000001940"/>
    </source>
</evidence>
<evidence type="ECO:0000312" key="8">
    <source>
        <dbReference type="WormBase" id="W01A8.1a"/>
    </source>
</evidence>
<evidence type="ECO:0000312" key="9">
    <source>
        <dbReference type="WormBase" id="W01A8.1b"/>
    </source>
</evidence>
<evidence type="ECO:0000312" key="10">
    <source>
        <dbReference type="WormBase" id="W01A8.1c"/>
    </source>
</evidence>
<keyword id="KW-0025">Alternative splicing</keyword>
<keyword id="KW-0551">Lipid droplet</keyword>
<keyword id="KW-1185">Reference proteome</keyword>
<feature type="chain" id="PRO_0000442203" description="Perilipin-1 homolog" evidence="6">
    <location>
        <begin position="1"/>
        <end position="418"/>
    </location>
</feature>
<feature type="region of interest" description="Required for lipid droplet localization" evidence="1">
    <location>
        <begin position="211"/>
        <end position="275"/>
    </location>
</feature>
<feature type="splice variant" id="VSP_059202" description="In isoform a and isoform b." evidence="6">
    <location>
        <begin position="231"/>
        <end position="233"/>
    </location>
</feature>
<feature type="splice variant" id="VSP_059203" description="In isoform b." evidence="6">
    <original>IISAEW</original>
    <variation>VRQQTE</variation>
    <location>
        <begin position="383"/>
        <end position="388"/>
    </location>
</feature>
<feature type="splice variant" id="VSP_059204" description="In isoform b." evidence="6">
    <location>
        <begin position="389"/>
        <end position="418"/>
    </location>
</feature>
<name>PLIN1_CAEEL</name>
<protein>
    <recommendedName>
        <fullName evidence="6">Perilipin-1 homolog</fullName>
    </recommendedName>
    <alternativeName>
        <fullName evidence="6">Lipid droplet-associated protein</fullName>
    </alternativeName>
</protein>
<proteinExistence type="evidence at protein level"/>
<gene>
    <name evidence="5 10" type="primary">plin-1</name>
    <name evidence="4 10" type="synonym">mdt-28</name>
    <name evidence="10" type="ORF">W01A8.1</name>
</gene>
<sequence>MTDVEQPVSVEDQQAQAQSYYDQVLGNAYVQTAINAYTKTKEFHPLLNSTLNSAEEKVSTVGNYAAQKAYDGYNSYYVKPKNTAYEAVSYGTERAKTAVESGKQAAIVGGTFGIGAAVVLTQFSLALSAGGAALVLEQVDSAKKLGSSAISTIKEAELAVEHRIFSALHQAQRIAMVPVEKITENTNSLLDILDGAVQKGLNIEVPPSVNLTIGQRVKNLASLIVQGVSNKLFKAHDHVIDPINERARNYLEQLSQSFVLLDIVREKKTWVIEKSNELSTSVFDFKKTLEEEAQKYKVAPEEMLMKHIQSTSEQLSTQLQSLREKGQNVFGDGTKIDSTIDYLENLKKNFTDAEDVYKVRDEVLNEGRQRIAELSTWTTSLLIISAEWQFEPEDLLIEELYFDAPPPVRTRNLYRNRA</sequence>
<organism evidence="7">
    <name type="scientific">Caenorhabditis elegans</name>
    <dbReference type="NCBI Taxonomy" id="6239"/>
    <lineage>
        <taxon>Eukaryota</taxon>
        <taxon>Metazoa</taxon>
        <taxon>Ecdysozoa</taxon>
        <taxon>Nematoda</taxon>
        <taxon>Chromadorea</taxon>
        <taxon>Rhabditida</taxon>
        <taxon>Rhabditina</taxon>
        <taxon>Rhabditomorpha</taxon>
        <taxon>Rhabditoidea</taxon>
        <taxon>Rhabditidae</taxon>
        <taxon>Peloderinae</taxon>
        <taxon>Caenorhabditis</taxon>
    </lineage>
</organism>